<feature type="chain" id="PRO_0000338384" description="CBL-interacting protein kinase 26">
    <location>
        <begin position="1"/>
        <end position="493"/>
    </location>
</feature>
<feature type="domain" description="Protein kinase" evidence="2">
    <location>
        <begin position="12"/>
        <end position="266"/>
    </location>
</feature>
<feature type="domain" description="NAF" evidence="3">
    <location>
        <begin position="320"/>
        <end position="360"/>
    </location>
</feature>
<feature type="region of interest" description="Activation loop" evidence="1">
    <location>
        <begin position="152"/>
        <end position="181"/>
    </location>
</feature>
<feature type="region of interest" description="Disordered" evidence="5">
    <location>
        <begin position="311"/>
        <end position="332"/>
    </location>
</feature>
<feature type="region of interest" description="PPI" evidence="1">
    <location>
        <begin position="365"/>
        <end position="394"/>
    </location>
</feature>
<feature type="region of interest" description="Disordered" evidence="5">
    <location>
        <begin position="465"/>
        <end position="493"/>
    </location>
</feature>
<feature type="compositionally biased region" description="Polar residues" evidence="5">
    <location>
        <begin position="316"/>
        <end position="332"/>
    </location>
</feature>
<feature type="active site" description="Proton acceptor" evidence="2 4">
    <location>
        <position position="134"/>
    </location>
</feature>
<feature type="binding site" evidence="2">
    <location>
        <begin position="18"/>
        <end position="26"/>
    </location>
    <ligand>
        <name>ATP</name>
        <dbReference type="ChEBI" id="CHEBI:30616"/>
    </ligand>
</feature>
<feature type="binding site" evidence="2">
    <location>
        <position position="41"/>
    </location>
    <ligand>
        <name>ATP</name>
        <dbReference type="ChEBI" id="CHEBI:30616"/>
    </ligand>
</feature>
<gene>
    <name type="primary">CIPK26</name>
    <name type="ordered locus">Os02g0161000</name>
    <name type="ordered locus">LOC_Os02g06570</name>
    <name type="ORF">B1103G11.47</name>
    <name type="ORF">OJ9003_G05.12</name>
    <name type="ORF">OsJ_005311</name>
</gene>
<evidence type="ECO:0000250" key="1"/>
<evidence type="ECO:0000255" key="2">
    <source>
        <dbReference type="PROSITE-ProRule" id="PRU00159"/>
    </source>
</evidence>
<evidence type="ECO:0000255" key="3">
    <source>
        <dbReference type="PROSITE-ProRule" id="PRU00256"/>
    </source>
</evidence>
<evidence type="ECO:0000255" key="4">
    <source>
        <dbReference type="PROSITE-ProRule" id="PRU10027"/>
    </source>
</evidence>
<evidence type="ECO:0000256" key="5">
    <source>
        <dbReference type="SAM" id="MobiDB-lite"/>
    </source>
</evidence>
<evidence type="ECO:0000305" key="6"/>
<sequence>MDDRRTILMDRYEIGRQLGQGNFAKVYYARNLTSGQAVAIKMIDKEKVTRVGLMVQIKREISIMRLVKHPNILQLFEVMASKSKIYFVLEYAKGGELFKKISKGKFSEDVARRYFHQLISGIDYCHSRGVYHRDLKPENLLLDENESLKVSDFGLSALSESKRHDGLLHTTCGTPAYVAPEVLSRRGYDGAKADIWSCGVILFVLVSGYLPFHDTNLIEMYRKIAKAEYKCPRSFSAELKDLLYKILDPDPSTRISIPKIKRSAWYRKSSDVNALKSKHETGDKVYKGEATTSDTTECSIFEGNRASSRDKVYTNGEATTSDSPECSNSDGKQASLSLPNLNAFDIISLSTGFDLSNLFEERYGRREERFTTRQPAAAIFAKLNELARRFKLKIKKKENGVLRLVAPKEGIKGLLELDAEVFELAPSFHLVEFKKSNGDTIEYQKLMKEDIRPALKDIVWAWQGGQHQQPEQSMQGMQGEQQPSRLPSQQPQG</sequence>
<reference key="1">
    <citation type="journal article" date="2005" name="Nature">
        <title>The map-based sequence of the rice genome.</title>
        <authorList>
            <consortium name="International rice genome sequencing project (IRGSP)"/>
        </authorList>
    </citation>
    <scope>NUCLEOTIDE SEQUENCE [LARGE SCALE GENOMIC DNA]</scope>
    <source>
        <strain>cv. Nipponbare</strain>
    </source>
</reference>
<reference key="2">
    <citation type="journal article" date="2008" name="Nucleic Acids Res.">
        <title>The rice annotation project database (RAP-DB): 2008 update.</title>
        <authorList>
            <consortium name="The rice annotation project (RAP)"/>
        </authorList>
    </citation>
    <scope>GENOME REANNOTATION</scope>
    <source>
        <strain>cv. Nipponbare</strain>
    </source>
</reference>
<reference key="3">
    <citation type="journal article" date="2013" name="Rice">
        <title>Improvement of the Oryza sativa Nipponbare reference genome using next generation sequence and optical map data.</title>
        <authorList>
            <person name="Kawahara Y."/>
            <person name="de la Bastide M."/>
            <person name="Hamilton J.P."/>
            <person name="Kanamori H."/>
            <person name="McCombie W.R."/>
            <person name="Ouyang S."/>
            <person name="Schwartz D.C."/>
            <person name="Tanaka T."/>
            <person name="Wu J."/>
            <person name="Zhou S."/>
            <person name="Childs K.L."/>
            <person name="Davidson R.M."/>
            <person name="Lin H."/>
            <person name="Quesada-Ocampo L."/>
            <person name="Vaillancourt B."/>
            <person name="Sakai H."/>
            <person name="Lee S.S."/>
            <person name="Kim J."/>
            <person name="Numa H."/>
            <person name="Itoh T."/>
            <person name="Buell C.R."/>
            <person name="Matsumoto T."/>
        </authorList>
    </citation>
    <scope>GENOME REANNOTATION</scope>
    <source>
        <strain>cv. Nipponbare</strain>
    </source>
</reference>
<reference key="4">
    <citation type="journal article" date="2005" name="PLoS Biol.">
        <title>The genomes of Oryza sativa: a history of duplications.</title>
        <authorList>
            <person name="Yu J."/>
            <person name="Wang J."/>
            <person name="Lin W."/>
            <person name="Li S."/>
            <person name="Li H."/>
            <person name="Zhou J."/>
            <person name="Ni P."/>
            <person name="Dong W."/>
            <person name="Hu S."/>
            <person name="Zeng C."/>
            <person name="Zhang J."/>
            <person name="Zhang Y."/>
            <person name="Li R."/>
            <person name="Xu Z."/>
            <person name="Li S."/>
            <person name="Li X."/>
            <person name="Zheng H."/>
            <person name="Cong L."/>
            <person name="Lin L."/>
            <person name="Yin J."/>
            <person name="Geng J."/>
            <person name="Li G."/>
            <person name="Shi J."/>
            <person name="Liu J."/>
            <person name="Lv H."/>
            <person name="Li J."/>
            <person name="Wang J."/>
            <person name="Deng Y."/>
            <person name="Ran L."/>
            <person name="Shi X."/>
            <person name="Wang X."/>
            <person name="Wu Q."/>
            <person name="Li C."/>
            <person name="Ren X."/>
            <person name="Wang J."/>
            <person name="Wang X."/>
            <person name="Li D."/>
            <person name="Liu D."/>
            <person name="Zhang X."/>
            <person name="Ji Z."/>
            <person name="Zhao W."/>
            <person name="Sun Y."/>
            <person name="Zhang Z."/>
            <person name="Bao J."/>
            <person name="Han Y."/>
            <person name="Dong L."/>
            <person name="Ji J."/>
            <person name="Chen P."/>
            <person name="Wu S."/>
            <person name="Liu J."/>
            <person name="Xiao Y."/>
            <person name="Bu D."/>
            <person name="Tan J."/>
            <person name="Yang L."/>
            <person name="Ye C."/>
            <person name="Zhang J."/>
            <person name="Xu J."/>
            <person name="Zhou Y."/>
            <person name="Yu Y."/>
            <person name="Zhang B."/>
            <person name="Zhuang S."/>
            <person name="Wei H."/>
            <person name="Liu B."/>
            <person name="Lei M."/>
            <person name="Yu H."/>
            <person name="Li Y."/>
            <person name="Xu H."/>
            <person name="Wei S."/>
            <person name="He X."/>
            <person name="Fang L."/>
            <person name="Zhang Z."/>
            <person name="Zhang Y."/>
            <person name="Huang X."/>
            <person name="Su Z."/>
            <person name="Tong W."/>
            <person name="Li J."/>
            <person name="Tong Z."/>
            <person name="Li S."/>
            <person name="Ye J."/>
            <person name="Wang L."/>
            <person name="Fang L."/>
            <person name="Lei T."/>
            <person name="Chen C.-S."/>
            <person name="Chen H.-C."/>
            <person name="Xu Z."/>
            <person name="Li H."/>
            <person name="Huang H."/>
            <person name="Zhang F."/>
            <person name="Xu H."/>
            <person name="Li N."/>
            <person name="Zhao C."/>
            <person name="Li S."/>
            <person name="Dong L."/>
            <person name="Huang Y."/>
            <person name="Li L."/>
            <person name="Xi Y."/>
            <person name="Qi Q."/>
            <person name="Li W."/>
            <person name="Zhang B."/>
            <person name="Hu W."/>
            <person name="Zhang Y."/>
            <person name="Tian X."/>
            <person name="Jiao Y."/>
            <person name="Liang X."/>
            <person name="Jin J."/>
            <person name="Gao L."/>
            <person name="Zheng W."/>
            <person name="Hao B."/>
            <person name="Liu S.-M."/>
            <person name="Wang W."/>
            <person name="Yuan L."/>
            <person name="Cao M."/>
            <person name="McDermott J."/>
            <person name="Samudrala R."/>
            <person name="Wang J."/>
            <person name="Wong G.K.-S."/>
            <person name="Yang H."/>
        </authorList>
    </citation>
    <scope>NUCLEOTIDE SEQUENCE [LARGE SCALE GENOMIC DNA]</scope>
    <source>
        <strain>cv. Nipponbare</strain>
    </source>
</reference>
<reference key="5">
    <citation type="journal article" date="2003" name="Science">
        <title>Collection, mapping, and annotation of over 28,000 cDNA clones from japonica rice.</title>
        <authorList>
            <consortium name="The rice full-length cDNA consortium"/>
        </authorList>
    </citation>
    <scope>NUCLEOTIDE SEQUENCE [LARGE SCALE MRNA]</scope>
    <source>
        <strain>cv. Nipponbare</strain>
    </source>
</reference>
<reference key="6">
    <citation type="journal article" date="2004" name="Plant Physiol.">
        <title>Calcium sensors and their interacting protein kinases: genomics of the Arabidopsis and rice CBL-CIPK signaling networks.</title>
        <authorList>
            <person name="Kolukisaoglu U."/>
            <person name="Weinl S."/>
            <person name="Blazevic D."/>
            <person name="Batistic O."/>
            <person name="Kudla J."/>
        </authorList>
    </citation>
    <scope>GENE FAMILY</scope>
    <scope>NOMENCLATURE</scope>
</reference>
<comment type="function">
    <text evidence="1">CIPK serine-threonine protein kinases interact with CBL proteins. Binding of a CBL protein to the regulatory NAF domain of CIPK protein lead to the activation of the kinase in a calcium-dependent manner (By similarity).</text>
</comment>
<comment type="catalytic activity">
    <reaction>
        <text>L-seryl-[protein] + ATP = O-phospho-L-seryl-[protein] + ADP + H(+)</text>
        <dbReference type="Rhea" id="RHEA:17989"/>
        <dbReference type="Rhea" id="RHEA-COMP:9863"/>
        <dbReference type="Rhea" id="RHEA-COMP:11604"/>
        <dbReference type="ChEBI" id="CHEBI:15378"/>
        <dbReference type="ChEBI" id="CHEBI:29999"/>
        <dbReference type="ChEBI" id="CHEBI:30616"/>
        <dbReference type="ChEBI" id="CHEBI:83421"/>
        <dbReference type="ChEBI" id="CHEBI:456216"/>
        <dbReference type="EC" id="2.7.11.1"/>
    </reaction>
</comment>
<comment type="catalytic activity">
    <reaction>
        <text>L-threonyl-[protein] + ATP = O-phospho-L-threonyl-[protein] + ADP + H(+)</text>
        <dbReference type="Rhea" id="RHEA:46608"/>
        <dbReference type="Rhea" id="RHEA-COMP:11060"/>
        <dbReference type="Rhea" id="RHEA-COMP:11605"/>
        <dbReference type="ChEBI" id="CHEBI:15378"/>
        <dbReference type="ChEBI" id="CHEBI:30013"/>
        <dbReference type="ChEBI" id="CHEBI:30616"/>
        <dbReference type="ChEBI" id="CHEBI:61977"/>
        <dbReference type="ChEBI" id="CHEBI:456216"/>
        <dbReference type="EC" id="2.7.11.1"/>
    </reaction>
</comment>
<comment type="cofactor">
    <cofactor evidence="1">
        <name>Mn(2+)</name>
        <dbReference type="ChEBI" id="CHEBI:29035"/>
    </cofactor>
</comment>
<comment type="domain">
    <text evidence="1">The activation loop within the kinase domain is the target of phosphorylation/activation by upstream protein kinases. The PPI motif mediates the interaction with the ABI (abscisic acid-insensitive) phosphatases (By similarity).</text>
</comment>
<comment type="similarity">
    <text evidence="6">Belongs to the protein kinase superfamily. CAMK Ser/Thr protein kinase family. SNF1 subfamily.</text>
</comment>
<accession>Q6H7U5</accession>
<proteinExistence type="evidence at transcript level"/>
<name>CIPKQ_ORYSJ</name>
<protein>
    <recommendedName>
        <fullName>CBL-interacting protein kinase 26</fullName>
        <ecNumber>2.7.11.1</ecNumber>
    </recommendedName>
    <alternativeName>
        <fullName>OsCIPK26</fullName>
    </alternativeName>
</protein>
<keyword id="KW-0067">ATP-binding</keyword>
<keyword id="KW-0418">Kinase</keyword>
<keyword id="KW-0464">Manganese</keyword>
<keyword id="KW-0547">Nucleotide-binding</keyword>
<keyword id="KW-1185">Reference proteome</keyword>
<keyword id="KW-0723">Serine/threonine-protein kinase</keyword>
<keyword id="KW-0808">Transferase</keyword>
<organism>
    <name type="scientific">Oryza sativa subsp. japonica</name>
    <name type="common">Rice</name>
    <dbReference type="NCBI Taxonomy" id="39947"/>
    <lineage>
        <taxon>Eukaryota</taxon>
        <taxon>Viridiplantae</taxon>
        <taxon>Streptophyta</taxon>
        <taxon>Embryophyta</taxon>
        <taxon>Tracheophyta</taxon>
        <taxon>Spermatophyta</taxon>
        <taxon>Magnoliopsida</taxon>
        <taxon>Liliopsida</taxon>
        <taxon>Poales</taxon>
        <taxon>Poaceae</taxon>
        <taxon>BOP clade</taxon>
        <taxon>Oryzoideae</taxon>
        <taxon>Oryzeae</taxon>
        <taxon>Oryzinae</taxon>
        <taxon>Oryza</taxon>
        <taxon>Oryza sativa</taxon>
    </lineage>
</organism>
<dbReference type="EC" id="2.7.11.1"/>
<dbReference type="EMBL" id="AP004126">
    <property type="protein sequence ID" value="BAD25204.1"/>
    <property type="molecule type" value="Genomic_DNA"/>
</dbReference>
<dbReference type="EMBL" id="AP004843">
    <property type="protein sequence ID" value="BAD28052.1"/>
    <property type="molecule type" value="Genomic_DNA"/>
</dbReference>
<dbReference type="EMBL" id="AP008208">
    <property type="protein sequence ID" value="BAF07888.1"/>
    <property type="molecule type" value="Genomic_DNA"/>
</dbReference>
<dbReference type="EMBL" id="AP014958">
    <property type="protein sequence ID" value="BAS77108.1"/>
    <property type="molecule type" value="Genomic_DNA"/>
</dbReference>
<dbReference type="EMBL" id="CM000139">
    <property type="protein sequence ID" value="EAZ21828.1"/>
    <property type="molecule type" value="Genomic_DNA"/>
</dbReference>
<dbReference type="EMBL" id="AK111660">
    <property type="status" value="NOT_ANNOTATED_CDS"/>
    <property type="molecule type" value="mRNA"/>
</dbReference>
<dbReference type="RefSeq" id="XP_015624706.1">
    <property type="nucleotide sequence ID" value="XM_015769220.1"/>
</dbReference>
<dbReference type="SMR" id="Q6H7U5"/>
<dbReference type="BioGRID" id="797420">
    <property type="interactions" value="3"/>
</dbReference>
<dbReference type="FunCoup" id="Q6H7U5">
    <property type="interactions" value="451"/>
</dbReference>
<dbReference type="STRING" id="39947.Q6H7U5"/>
<dbReference type="PaxDb" id="39947-Q6H7U5"/>
<dbReference type="EnsemblPlants" id="Os02t0161000-01">
    <property type="protein sequence ID" value="Os02t0161000-01"/>
    <property type="gene ID" value="Os02g0161000"/>
</dbReference>
<dbReference type="Gramene" id="Os02t0161000-01">
    <property type="protein sequence ID" value="Os02t0161000-01"/>
    <property type="gene ID" value="Os02g0161000"/>
</dbReference>
<dbReference type="KEGG" id="dosa:Os02g0161000"/>
<dbReference type="eggNOG" id="KOG0583">
    <property type="taxonomic scope" value="Eukaryota"/>
</dbReference>
<dbReference type="HOGENOM" id="CLU_000288_59_0_1"/>
<dbReference type="InParanoid" id="Q6H7U5"/>
<dbReference type="OMA" id="CLCKVYE"/>
<dbReference type="OrthoDB" id="644943at2759"/>
<dbReference type="Proteomes" id="UP000000763">
    <property type="component" value="Chromosome 2"/>
</dbReference>
<dbReference type="Proteomes" id="UP000007752">
    <property type="component" value="Chromosome 2"/>
</dbReference>
<dbReference type="Proteomes" id="UP000059680">
    <property type="component" value="Chromosome 2"/>
</dbReference>
<dbReference type="ExpressionAtlas" id="Q6H7U5">
    <property type="expression patterns" value="baseline and differential"/>
</dbReference>
<dbReference type="GO" id="GO:0005524">
    <property type="term" value="F:ATP binding"/>
    <property type="evidence" value="ECO:0007669"/>
    <property type="project" value="UniProtKB-KW"/>
</dbReference>
<dbReference type="GO" id="GO:0106310">
    <property type="term" value="F:protein serine kinase activity"/>
    <property type="evidence" value="ECO:0007669"/>
    <property type="project" value="RHEA"/>
</dbReference>
<dbReference type="GO" id="GO:0004674">
    <property type="term" value="F:protein serine/threonine kinase activity"/>
    <property type="evidence" value="ECO:0000318"/>
    <property type="project" value="GO_Central"/>
</dbReference>
<dbReference type="GO" id="GO:0007165">
    <property type="term" value="P:signal transduction"/>
    <property type="evidence" value="ECO:0000318"/>
    <property type="project" value="GO_Central"/>
</dbReference>
<dbReference type="CDD" id="cd12195">
    <property type="entry name" value="CIPK_C"/>
    <property type="match status" value="1"/>
</dbReference>
<dbReference type="CDD" id="cd14663">
    <property type="entry name" value="STKc_SnRK3"/>
    <property type="match status" value="1"/>
</dbReference>
<dbReference type="FunFam" id="1.10.510.10:FF:000279">
    <property type="entry name" value="Non-specific serine/threonine protein kinase"/>
    <property type="match status" value="1"/>
</dbReference>
<dbReference type="FunFam" id="3.30.200.20:FF:000096">
    <property type="entry name" value="Non-specific serine/threonine protein kinase"/>
    <property type="match status" value="1"/>
</dbReference>
<dbReference type="FunFam" id="3.30.310.80:FF:000005">
    <property type="entry name" value="Non-specific serine/threonine protein kinase"/>
    <property type="match status" value="1"/>
</dbReference>
<dbReference type="Gene3D" id="3.30.310.80">
    <property type="entry name" value="Kinase associated domain 1, KA1"/>
    <property type="match status" value="1"/>
</dbReference>
<dbReference type="Gene3D" id="1.10.510.10">
    <property type="entry name" value="Transferase(Phosphotransferase) domain 1"/>
    <property type="match status" value="1"/>
</dbReference>
<dbReference type="InterPro" id="IPR011009">
    <property type="entry name" value="Kinase-like_dom_sf"/>
</dbReference>
<dbReference type="InterPro" id="IPR018451">
    <property type="entry name" value="NAF/FISL_domain"/>
</dbReference>
<dbReference type="InterPro" id="IPR004041">
    <property type="entry name" value="NAF_dom"/>
</dbReference>
<dbReference type="InterPro" id="IPR000719">
    <property type="entry name" value="Prot_kinase_dom"/>
</dbReference>
<dbReference type="InterPro" id="IPR017441">
    <property type="entry name" value="Protein_kinase_ATP_BS"/>
</dbReference>
<dbReference type="InterPro" id="IPR008271">
    <property type="entry name" value="Ser/Thr_kinase_AS"/>
</dbReference>
<dbReference type="PANTHER" id="PTHR43895">
    <property type="entry name" value="CALCIUM/CALMODULIN-DEPENDENT PROTEIN KINASE KINASE-RELATED"/>
    <property type="match status" value="1"/>
</dbReference>
<dbReference type="PANTHER" id="PTHR43895:SF148">
    <property type="entry name" value="CBL-INTERACTING PROTEIN KINASE 26"/>
    <property type="match status" value="1"/>
</dbReference>
<dbReference type="Pfam" id="PF03822">
    <property type="entry name" value="NAF"/>
    <property type="match status" value="1"/>
</dbReference>
<dbReference type="Pfam" id="PF00069">
    <property type="entry name" value="Pkinase"/>
    <property type="match status" value="1"/>
</dbReference>
<dbReference type="SMART" id="SM00220">
    <property type="entry name" value="S_TKc"/>
    <property type="match status" value="1"/>
</dbReference>
<dbReference type="SUPFAM" id="SSF56112">
    <property type="entry name" value="Protein kinase-like (PK-like)"/>
    <property type="match status" value="1"/>
</dbReference>
<dbReference type="PROSITE" id="PS50816">
    <property type="entry name" value="NAF"/>
    <property type="match status" value="1"/>
</dbReference>
<dbReference type="PROSITE" id="PS00107">
    <property type="entry name" value="PROTEIN_KINASE_ATP"/>
    <property type="match status" value="1"/>
</dbReference>
<dbReference type="PROSITE" id="PS50011">
    <property type="entry name" value="PROTEIN_KINASE_DOM"/>
    <property type="match status" value="1"/>
</dbReference>
<dbReference type="PROSITE" id="PS00108">
    <property type="entry name" value="PROTEIN_KINASE_ST"/>
    <property type="match status" value="1"/>
</dbReference>